<proteinExistence type="inferred from homology"/>
<name>Y486_STAAC</name>
<evidence type="ECO:0000255" key="1">
    <source>
        <dbReference type="PROSITE-ProRule" id="PRU00303"/>
    </source>
</evidence>
<evidence type="ECO:0000305" key="2"/>
<protein>
    <recommendedName>
        <fullName>Uncharacterized lipoprotein SACOL0486</fullName>
    </recommendedName>
</protein>
<keyword id="KW-1003">Cell membrane</keyword>
<keyword id="KW-0449">Lipoprotein</keyword>
<keyword id="KW-0472">Membrane</keyword>
<keyword id="KW-0564">Palmitate</keyword>
<keyword id="KW-0732">Signal</keyword>
<comment type="subcellular location">
    <subcellularLocation>
        <location evidence="1">Cell membrane</location>
        <topology evidence="1">Lipid-anchor</topology>
    </subcellularLocation>
</comment>
<comment type="similarity">
    <text evidence="2">Belongs to the staphylococcal tandem lipoprotein family.</text>
</comment>
<comment type="sequence caution" evidence="2">
    <conflict type="erroneous initiation">
        <sequence resource="EMBL-CDS" id="AAW37607"/>
    </conflict>
</comment>
<reference key="1">
    <citation type="journal article" date="2005" name="J. Bacteriol.">
        <title>Insights on evolution of virulence and resistance from the complete genome analysis of an early methicillin-resistant Staphylococcus aureus strain and a biofilm-producing methicillin-resistant Staphylococcus epidermidis strain.</title>
        <authorList>
            <person name="Gill S.R."/>
            <person name="Fouts D.E."/>
            <person name="Archer G.L."/>
            <person name="Mongodin E.F."/>
            <person name="DeBoy R.T."/>
            <person name="Ravel J."/>
            <person name="Paulsen I.T."/>
            <person name="Kolonay J.F."/>
            <person name="Brinkac L.M."/>
            <person name="Beanan M.J."/>
            <person name="Dodson R.J."/>
            <person name="Daugherty S.C."/>
            <person name="Madupu R."/>
            <person name="Angiuoli S.V."/>
            <person name="Durkin A.S."/>
            <person name="Haft D.H."/>
            <person name="Vamathevan J.J."/>
            <person name="Khouri H."/>
            <person name="Utterback T.R."/>
            <person name="Lee C."/>
            <person name="Dimitrov G."/>
            <person name="Jiang L."/>
            <person name="Qin H."/>
            <person name="Weidman J."/>
            <person name="Tran K."/>
            <person name="Kang K.H."/>
            <person name="Hance I.R."/>
            <person name="Nelson K.E."/>
            <person name="Fraser C.M."/>
        </authorList>
    </citation>
    <scope>NUCLEOTIDE SEQUENCE [LARGE SCALE GENOMIC DNA]</scope>
    <source>
        <strain>COL</strain>
    </source>
</reference>
<accession>Q5HIN1</accession>
<organism>
    <name type="scientific">Staphylococcus aureus (strain COL)</name>
    <dbReference type="NCBI Taxonomy" id="93062"/>
    <lineage>
        <taxon>Bacteria</taxon>
        <taxon>Bacillati</taxon>
        <taxon>Bacillota</taxon>
        <taxon>Bacilli</taxon>
        <taxon>Bacillales</taxon>
        <taxon>Staphylococcaceae</taxon>
        <taxon>Staphylococcus</taxon>
    </lineage>
</organism>
<feature type="signal peptide" evidence="1">
    <location>
        <begin position="1"/>
        <end position="22"/>
    </location>
</feature>
<feature type="chain" id="PRO_0000282112" description="Uncharacterized lipoprotein SACOL0486">
    <location>
        <begin position="23"/>
        <end position="270"/>
    </location>
</feature>
<feature type="lipid moiety-binding region" description="N-palmitoyl cysteine" evidence="1">
    <location>
        <position position="23"/>
    </location>
</feature>
<feature type="lipid moiety-binding region" description="S-diacylglycerol cysteine" evidence="1">
    <location>
        <position position="23"/>
    </location>
</feature>
<sequence length="270" mass="31468">MEYIKKIALYMSVLLLIIFIGGCGNMKDEQKKEEQTNKTDSKEEQIKKSFAKTLDMYPIKNLEDLYDKEGYRDGEFKKGDKGTWTILTGFSKSNKPGVLDDEGMVLYLNRNTKKATGYYFVNKVYDDISKNHNEKKYRVELKNNKIVLLDNVEDKKLKQKIENFKFFSQYADFKDLKNYQDGNITTNENVPSYEAQYKMNNSDKNVKKLREIYPITTNNSPNLKLYIDGDIKGSSVGYKKIEYKFSKDKGQETTLRDYLNFGPSEGENVE</sequence>
<gene>
    <name type="ordered locus">SACOL0486</name>
</gene>
<dbReference type="EMBL" id="CP000046">
    <property type="protein sequence ID" value="AAW37607.1"/>
    <property type="status" value="ALT_INIT"/>
    <property type="molecule type" value="Genomic_DNA"/>
</dbReference>
<dbReference type="SMR" id="Q5HIN1"/>
<dbReference type="KEGG" id="sac:SACOL0486"/>
<dbReference type="HOGENOM" id="CLU_071589_0_1_9"/>
<dbReference type="Proteomes" id="UP000000530">
    <property type="component" value="Chromosome"/>
</dbReference>
<dbReference type="GO" id="GO:0005886">
    <property type="term" value="C:plasma membrane"/>
    <property type="evidence" value="ECO:0007669"/>
    <property type="project" value="UniProtKB-SubCell"/>
</dbReference>
<dbReference type="Gene3D" id="2.50.20.40">
    <property type="match status" value="1"/>
</dbReference>
<dbReference type="InterPro" id="IPR007595">
    <property type="entry name" value="Csa"/>
</dbReference>
<dbReference type="InterPro" id="IPR038641">
    <property type="entry name" value="Csa_sf"/>
</dbReference>
<dbReference type="NCBIfam" id="TIGR01742">
    <property type="entry name" value="SA_tandem_lipo"/>
    <property type="match status" value="1"/>
</dbReference>
<dbReference type="Pfam" id="PF04507">
    <property type="entry name" value="DUF576"/>
    <property type="match status" value="1"/>
</dbReference>
<dbReference type="PROSITE" id="PS51257">
    <property type="entry name" value="PROKAR_LIPOPROTEIN"/>
    <property type="match status" value="1"/>
</dbReference>